<evidence type="ECO:0000255" key="1">
    <source>
        <dbReference type="PROSITE-ProRule" id="PRU00080"/>
    </source>
</evidence>
<evidence type="ECO:0000255" key="2">
    <source>
        <dbReference type="PROSITE-ProRule" id="PRU00189"/>
    </source>
</evidence>
<evidence type="ECO:0000269" key="3">
    <source>
    </source>
</evidence>
<evidence type="ECO:0000269" key="4">
    <source>
    </source>
</evidence>
<evidence type="ECO:0000303" key="5">
    <source>
    </source>
</evidence>
<evidence type="ECO:0000305" key="6"/>
<dbReference type="EMBL" id="AF174596">
    <property type="protein sequence ID" value="AAF04517.1"/>
    <property type="status" value="ALT_INIT"/>
    <property type="molecule type" value="mRNA"/>
</dbReference>
<dbReference type="EMBL" id="AF233224">
    <property type="protein sequence ID" value="AAF67154.1"/>
    <property type="molecule type" value="mRNA"/>
</dbReference>
<dbReference type="EMBL" id="AF201932">
    <property type="protein sequence ID" value="AAF86868.1"/>
    <property type="molecule type" value="mRNA"/>
</dbReference>
<dbReference type="EMBL" id="AY358721">
    <property type="protein sequence ID" value="AAQ89083.1"/>
    <property type="molecule type" value="mRNA"/>
</dbReference>
<dbReference type="EMBL" id="AK314483">
    <property type="protein sequence ID" value="BAG37087.1"/>
    <property type="molecule type" value="mRNA"/>
</dbReference>
<dbReference type="EMBL" id="AC097653">
    <property type="status" value="NOT_ANNOTATED_CDS"/>
    <property type="molecule type" value="Genomic_DNA"/>
</dbReference>
<dbReference type="EMBL" id="CH471056">
    <property type="protein sequence ID" value="EAX04741.1"/>
    <property type="molecule type" value="Genomic_DNA"/>
</dbReference>
<dbReference type="EMBL" id="CH471056">
    <property type="protein sequence ID" value="EAX04742.1"/>
    <property type="molecule type" value="Genomic_DNA"/>
</dbReference>
<dbReference type="EMBL" id="CH471056">
    <property type="protein sequence ID" value="EAX04744.1"/>
    <property type="molecule type" value="Genomic_DNA"/>
</dbReference>
<dbReference type="EMBL" id="BC014679">
    <property type="protein sequence ID" value="AAH14679.1"/>
    <property type="molecule type" value="mRNA"/>
</dbReference>
<dbReference type="EMBL" id="BC040456">
    <property type="protein sequence ID" value="AAH40456.1"/>
    <property type="molecule type" value="mRNA"/>
</dbReference>
<dbReference type="CCDS" id="CCDS3820.1">
    <molecule id="Q9NRD0-1"/>
</dbReference>
<dbReference type="RefSeq" id="NP_036312.2">
    <molecule id="Q9NRD0-1"/>
    <property type="nucleotide sequence ID" value="NM_012180.2"/>
</dbReference>
<dbReference type="SMR" id="Q9NRD0"/>
<dbReference type="BioGRID" id="117653">
    <property type="interactions" value="15"/>
</dbReference>
<dbReference type="ComplexPortal" id="CPX-7921">
    <property type="entry name" value="SCF E3 ubiquitin ligase complex, FBXO8 variant"/>
</dbReference>
<dbReference type="FunCoup" id="Q9NRD0">
    <property type="interactions" value="125"/>
</dbReference>
<dbReference type="IntAct" id="Q9NRD0">
    <property type="interactions" value="4"/>
</dbReference>
<dbReference type="STRING" id="9606.ENSP00000377280"/>
<dbReference type="iPTMnet" id="Q9NRD0"/>
<dbReference type="PhosphoSitePlus" id="Q9NRD0"/>
<dbReference type="BioMuta" id="FBXO8"/>
<dbReference type="DMDM" id="13124142"/>
<dbReference type="jPOST" id="Q9NRD0"/>
<dbReference type="MassIVE" id="Q9NRD0"/>
<dbReference type="PaxDb" id="9606-ENSP00000377280"/>
<dbReference type="PeptideAtlas" id="Q9NRD0"/>
<dbReference type="ProteomicsDB" id="34088"/>
<dbReference type="ProteomicsDB" id="82337">
    <molecule id="Q9NRD0-1"/>
</dbReference>
<dbReference type="Antibodypedia" id="1238">
    <property type="antibodies" value="239 antibodies from 25 providers"/>
</dbReference>
<dbReference type="DNASU" id="26269"/>
<dbReference type="Ensembl" id="ENST00000393674.7">
    <molecule id="Q9NRD0-1"/>
    <property type="protein sequence ID" value="ENSP00000377280.2"/>
    <property type="gene ID" value="ENSG00000164117.14"/>
</dbReference>
<dbReference type="Ensembl" id="ENST00000503293.5">
    <molecule id="Q9NRD0-2"/>
    <property type="protein sequence ID" value="ENSP00000422905.1"/>
    <property type="gene ID" value="ENSG00000164117.14"/>
</dbReference>
<dbReference type="Ensembl" id="ENST00000615392.4">
    <molecule id="Q9NRD0-2"/>
    <property type="protein sequence ID" value="ENSP00000484517.1"/>
    <property type="gene ID" value="ENSG00000164117.14"/>
</dbReference>
<dbReference type="GeneID" id="26269"/>
<dbReference type="KEGG" id="hsa:26269"/>
<dbReference type="MANE-Select" id="ENST00000393674.7">
    <property type="protein sequence ID" value="ENSP00000377280.2"/>
    <property type="RefSeq nucleotide sequence ID" value="NM_012180.3"/>
    <property type="RefSeq protein sequence ID" value="NP_036312.2"/>
</dbReference>
<dbReference type="UCSC" id="uc003itp.4">
    <molecule id="Q9NRD0-1"/>
    <property type="organism name" value="human"/>
</dbReference>
<dbReference type="AGR" id="HGNC:13587"/>
<dbReference type="CTD" id="26269"/>
<dbReference type="DisGeNET" id="26269"/>
<dbReference type="GeneCards" id="FBXO8"/>
<dbReference type="HGNC" id="HGNC:13587">
    <property type="gene designation" value="FBXO8"/>
</dbReference>
<dbReference type="HPA" id="ENSG00000164117">
    <property type="expression patterns" value="Low tissue specificity"/>
</dbReference>
<dbReference type="MIM" id="605649">
    <property type="type" value="gene"/>
</dbReference>
<dbReference type="neXtProt" id="NX_Q9NRD0"/>
<dbReference type="OpenTargets" id="ENSG00000164117"/>
<dbReference type="PharmGKB" id="PA28048"/>
<dbReference type="VEuPathDB" id="HostDB:ENSG00000164117"/>
<dbReference type="eggNOG" id="KOG0929">
    <property type="taxonomic scope" value="Eukaryota"/>
</dbReference>
<dbReference type="GeneTree" id="ENSGT00940000158356"/>
<dbReference type="HOGENOM" id="CLU_057531_0_0_1"/>
<dbReference type="InParanoid" id="Q9NRD0"/>
<dbReference type="OMA" id="NANPHEG"/>
<dbReference type="OrthoDB" id="430364at2759"/>
<dbReference type="PAN-GO" id="Q9NRD0">
    <property type="GO annotations" value="0 GO annotations based on evolutionary models"/>
</dbReference>
<dbReference type="PhylomeDB" id="Q9NRD0"/>
<dbReference type="PathwayCommons" id="Q9NRD0"/>
<dbReference type="SignaLink" id="Q9NRD0"/>
<dbReference type="SIGNOR" id="Q9NRD0"/>
<dbReference type="BioGRID-ORCS" id="26269">
    <property type="hits" value="16 hits in 1196 CRISPR screens"/>
</dbReference>
<dbReference type="ChiTaRS" id="FBXO8">
    <property type="organism name" value="human"/>
</dbReference>
<dbReference type="GenomeRNAi" id="26269"/>
<dbReference type="Pharos" id="Q9NRD0">
    <property type="development level" value="Tbio"/>
</dbReference>
<dbReference type="PRO" id="PR:Q9NRD0"/>
<dbReference type="Proteomes" id="UP000005640">
    <property type="component" value="Chromosome 4"/>
</dbReference>
<dbReference type="RNAct" id="Q9NRD0">
    <property type="molecule type" value="protein"/>
</dbReference>
<dbReference type="Bgee" id="ENSG00000164117">
    <property type="expression patterns" value="Expressed in jejunal mucosa and 180 other cell types or tissues"/>
</dbReference>
<dbReference type="ExpressionAtlas" id="Q9NRD0">
    <property type="expression patterns" value="baseline and differential"/>
</dbReference>
<dbReference type="GO" id="GO:0000151">
    <property type="term" value="C:ubiquitin ligase complex"/>
    <property type="evidence" value="ECO:0000303"/>
    <property type="project" value="UniProtKB"/>
</dbReference>
<dbReference type="GO" id="GO:0005085">
    <property type="term" value="F:guanyl-nucleotide exchange factor activity"/>
    <property type="evidence" value="ECO:0007669"/>
    <property type="project" value="UniProtKB-KW"/>
</dbReference>
<dbReference type="GO" id="GO:0032012">
    <property type="term" value="P:regulation of ARF protein signal transduction"/>
    <property type="evidence" value="ECO:0007669"/>
    <property type="project" value="InterPro"/>
</dbReference>
<dbReference type="GO" id="GO:0006511">
    <property type="term" value="P:ubiquitin-dependent protein catabolic process"/>
    <property type="evidence" value="ECO:0000303"/>
    <property type="project" value="UniProtKB"/>
</dbReference>
<dbReference type="CDD" id="cd22088">
    <property type="entry name" value="F-box_FBXO8"/>
    <property type="match status" value="1"/>
</dbReference>
<dbReference type="CDD" id="cd00171">
    <property type="entry name" value="Sec7"/>
    <property type="match status" value="1"/>
</dbReference>
<dbReference type="FunFam" id="1.10.1000.11:FF:000008">
    <property type="entry name" value="F-box only protein 8"/>
    <property type="match status" value="1"/>
</dbReference>
<dbReference type="FunFam" id="1.10.220.20:FF:000006">
    <property type="entry name" value="F-box only protein 8"/>
    <property type="match status" value="1"/>
</dbReference>
<dbReference type="FunFam" id="1.20.1280.50:FF:000014">
    <property type="entry name" value="F-box only protein 8"/>
    <property type="match status" value="1"/>
</dbReference>
<dbReference type="Gene3D" id="1.10.220.20">
    <property type="match status" value="1"/>
</dbReference>
<dbReference type="Gene3D" id="1.20.1280.50">
    <property type="match status" value="1"/>
</dbReference>
<dbReference type="Gene3D" id="1.10.1000.11">
    <property type="entry name" value="Arf Nucleotide-binding Site Opener,domain 2"/>
    <property type="match status" value="1"/>
</dbReference>
<dbReference type="InterPro" id="IPR036047">
    <property type="entry name" value="F-box-like_dom_sf"/>
</dbReference>
<dbReference type="InterPro" id="IPR001810">
    <property type="entry name" value="F-box_dom"/>
</dbReference>
<dbReference type="InterPro" id="IPR048003">
    <property type="entry name" value="FBXO8_F-box"/>
</dbReference>
<dbReference type="InterPro" id="IPR023394">
    <property type="entry name" value="Sec7_C_sf"/>
</dbReference>
<dbReference type="InterPro" id="IPR000904">
    <property type="entry name" value="Sec7_dom"/>
</dbReference>
<dbReference type="InterPro" id="IPR035999">
    <property type="entry name" value="Sec7_dom_sf"/>
</dbReference>
<dbReference type="PANTHER" id="PTHR10663:SF372">
    <property type="entry name" value="F-BOX ONLY PROTEIN 8"/>
    <property type="match status" value="1"/>
</dbReference>
<dbReference type="PANTHER" id="PTHR10663">
    <property type="entry name" value="GUANYL-NUCLEOTIDE EXCHANGE FACTOR"/>
    <property type="match status" value="1"/>
</dbReference>
<dbReference type="Pfam" id="PF12937">
    <property type="entry name" value="F-box-like"/>
    <property type="match status" value="1"/>
</dbReference>
<dbReference type="Pfam" id="PF01369">
    <property type="entry name" value="Sec7"/>
    <property type="match status" value="1"/>
</dbReference>
<dbReference type="SMART" id="SM00222">
    <property type="entry name" value="Sec7"/>
    <property type="match status" value="1"/>
</dbReference>
<dbReference type="SUPFAM" id="SSF81383">
    <property type="entry name" value="F-box domain"/>
    <property type="match status" value="1"/>
</dbReference>
<dbReference type="SUPFAM" id="SSF48425">
    <property type="entry name" value="Sec7 domain"/>
    <property type="match status" value="1"/>
</dbReference>
<dbReference type="PROSITE" id="PS50181">
    <property type="entry name" value="FBOX"/>
    <property type="match status" value="1"/>
</dbReference>
<dbReference type="PROSITE" id="PS50190">
    <property type="entry name" value="SEC7"/>
    <property type="match status" value="1"/>
</dbReference>
<gene>
    <name type="primary">FBXO8</name>
    <name type="synonym">FBS</name>
    <name type="synonym">FBX8</name>
    <name type="ORF">DC10</name>
    <name type="ORF">UNQ1877/PRO4320</name>
</gene>
<organism>
    <name type="scientific">Homo sapiens</name>
    <name type="common">Human</name>
    <dbReference type="NCBI Taxonomy" id="9606"/>
    <lineage>
        <taxon>Eukaryota</taxon>
        <taxon>Metazoa</taxon>
        <taxon>Chordata</taxon>
        <taxon>Craniata</taxon>
        <taxon>Vertebrata</taxon>
        <taxon>Euteleostomi</taxon>
        <taxon>Mammalia</taxon>
        <taxon>Eutheria</taxon>
        <taxon>Euarchontoglires</taxon>
        <taxon>Primates</taxon>
        <taxon>Haplorrhini</taxon>
        <taxon>Catarrhini</taxon>
        <taxon>Hominidae</taxon>
        <taxon>Homo</taxon>
    </lineage>
</organism>
<accession>Q9NRD0</accession>
<accession>B2RB40</accession>
<accession>D3DP41</accession>
<accession>G5E9Z0</accession>
<accession>Q6UWN4</accession>
<accession>Q8IWE1</accession>
<accession>Q9NRP5</accession>
<accession>Q9UKC4</accession>
<reference key="1">
    <citation type="journal article" date="1999" name="Curr. Biol.">
        <title>Identification of a family of human F-box proteins.</title>
        <authorList>
            <person name="Cenciarelli C."/>
            <person name="Chiaur D.S."/>
            <person name="Guardavaccaro D."/>
            <person name="Parks W."/>
            <person name="Vidal M."/>
            <person name="Pagano M."/>
        </authorList>
    </citation>
    <scope>NUCLEOTIDE SEQUENCE [MRNA] (ISOFORM 1)</scope>
</reference>
<reference key="2">
    <citation type="journal article" date="2000" name="Genomics">
        <title>cDNA cloning and expression analysis of new members of the mammalian F-box protein family.</title>
        <authorList>
            <person name="Ilyin G.P."/>
            <person name="Rialland M."/>
            <person name="Pigeon C."/>
            <person name="Guguen-Guillouzo C."/>
        </authorList>
    </citation>
    <scope>NUCLEOTIDE SEQUENCE [MRNA] (ISOFORM 1)</scope>
</reference>
<reference key="3">
    <citation type="submission" date="1999-11" db="EMBL/GenBank/DDBJ databases">
        <title>Novel genes expressed in human dendritic cell.</title>
        <authorList>
            <person name="Li Y."/>
            <person name="Peng Y."/>
            <person name="Qian B."/>
            <person name="Zhang Z."/>
            <person name="Han Z."/>
            <person name="Fu G."/>
            <person name="Chen Z."/>
        </authorList>
    </citation>
    <scope>NUCLEOTIDE SEQUENCE [LARGE SCALE MRNA] (ISOFORM 1)</scope>
    <source>
        <tissue>Dendritic cell</tissue>
    </source>
</reference>
<reference key="4">
    <citation type="journal article" date="2003" name="Genome Res.">
        <title>The secreted protein discovery initiative (SPDI), a large-scale effort to identify novel human secreted and transmembrane proteins: a bioinformatics assessment.</title>
        <authorList>
            <person name="Clark H.F."/>
            <person name="Gurney A.L."/>
            <person name="Abaya E."/>
            <person name="Baker K."/>
            <person name="Baldwin D.T."/>
            <person name="Brush J."/>
            <person name="Chen J."/>
            <person name="Chow B."/>
            <person name="Chui C."/>
            <person name="Crowley C."/>
            <person name="Currell B."/>
            <person name="Deuel B."/>
            <person name="Dowd P."/>
            <person name="Eaton D."/>
            <person name="Foster J.S."/>
            <person name="Grimaldi C."/>
            <person name="Gu Q."/>
            <person name="Hass P.E."/>
            <person name="Heldens S."/>
            <person name="Huang A."/>
            <person name="Kim H.S."/>
            <person name="Klimowski L."/>
            <person name="Jin Y."/>
            <person name="Johnson S."/>
            <person name="Lee J."/>
            <person name="Lewis L."/>
            <person name="Liao D."/>
            <person name="Mark M.R."/>
            <person name="Robbie E."/>
            <person name="Sanchez C."/>
            <person name="Schoenfeld J."/>
            <person name="Seshagiri S."/>
            <person name="Simmons L."/>
            <person name="Singh J."/>
            <person name="Smith V."/>
            <person name="Stinson J."/>
            <person name="Vagts A."/>
            <person name="Vandlen R.L."/>
            <person name="Watanabe C."/>
            <person name="Wieand D."/>
            <person name="Woods K."/>
            <person name="Xie M.-H."/>
            <person name="Yansura D.G."/>
            <person name="Yi S."/>
            <person name="Yu G."/>
            <person name="Yuan J."/>
            <person name="Zhang M."/>
            <person name="Zhang Z."/>
            <person name="Goddard A.D."/>
            <person name="Wood W.I."/>
            <person name="Godowski P.J."/>
            <person name="Gray A.M."/>
        </authorList>
    </citation>
    <scope>NUCLEOTIDE SEQUENCE [LARGE SCALE MRNA] (ISOFORM 1)</scope>
</reference>
<reference key="5">
    <citation type="journal article" date="2004" name="Nat. Genet.">
        <title>Complete sequencing and characterization of 21,243 full-length human cDNAs.</title>
        <authorList>
            <person name="Ota T."/>
            <person name="Suzuki Y."/>
            <person name="Nishikawa T."/>
            <person name="Otsuki T."/>
            <person name="Sugiyama T."/>
            <person name="Irie R."/>
            <person name="Wakamatsu A."/>
            <person name="Hayashi K."/>
            <person name="Sato H."/>
            <person name="Nagai K."/>
            <person name="Kimura K."/>
            <person name="Makita H."/>
            <person name="Sekine M."/>
            <person name="Obayashi M."/>
            <person name="Nishi T."/>
            <person name="Shibahara T."/>
            <person name="Tanaka T."/>
            <person name="Ishii S."/>
            <person name="Yamamoto J."/>
            <person name="Saito K."/>
            <person name="Kawai Y."/>
            <person name="Isono Y."/>
            <person name="Nakamura Y."/>
            <person name="Nagahari K."/>
            <person name="Murakami K."/>
            <person name="Yasuda T."/>
            <person name="Iwayanagi T."/>
            <person name="Wagatsuma M."/>
            <person name="Shiratori A."/>
            <person name="Sudo H."/>
            <person name="Hosoiri T."/>
            <person name="Kaku Y."/>
            <person name="Kodaira H."/>
            <person name="Kondo H."/>
            <person name="Sugawara M."/>
            <person name="Takahashi M."/>
            <person name="Kanda K."/>
            <person name="Yokoi T."/>
            <person name="Furuya T."/>
            <person name="Kikkawa E."/>
            <person name="Omura Y."/>
            <person name="Abe K."/>
            <person name="Kamihara K."/>
            <person name="Katsuta N."/>
            <person name="Sato K."/>
            <person name="Tanikawa M."/>
            <person name="Yamazaki M."/>
            <person name="Ninomiya K."/>
            <person name="Ishibashi T."/>
            <person name="Yamashita H."/>
            <person name="Murakawa K."/>
            <person name="Fujimori K."/>
            <person name="Tanai H."/>
            <person name="Kimata M."/>
            <person name="Watanabe M."/>
            <person name="Hiraoka S."/>
            <person name="Chiba Y."/>
            <person name="Ishida S."/>
            <person name="Ono Y."/>
            <person name="Takiguchi S."/>
            <person name="Watanabe S."/>
            <person name="Yosida M."/>
            <person name="Hotuta T."/>
            <person name="Kusano J."/>
            <person name="Kanehori K."/>
            <person name="Takahashi-Fujii A."/>
            <person name="Hara H."/>
            <person name="Tanase T.-O."/>
            <person name="Nomura Y."/>
            <person name="Togiya S."/>
            <person name="Komai F."/>
            <person name="Hara R."/>
            <person name="Takeuchi K."/>
            <person name="Arita M."/>
            <person name="Imose N."/>
            <person name="Musashino K."/>
            <person name="Yuuki H."/>
            <person name="Oshima A."/>
            <person name="Sasaki N."/>
            <person name="Aotsuka S."/>
            <person name="Yoshikawa Y."/>
            <person name="Matsunawa H."/>
            <person name="Ichihara T."/>
            <person name="Shiohata N."/>
            <person name="Sano S."/>
            <person name="Moriya S."/>
            <person name="Momiyama H."/>
            <person name="Satoh N."/>
            <person name="Takami S."/>
            <person name="Terashima Y."/>
            <person name="Suzuki O."/>
            <person name="Nakagawa S."/>
            <person name="Senoh A."/>
            <person name="Mizoguchi H."/>
            <person name="Goto Y."/>
            <person name="Shimizu F."/>
            <person name="Wakebe H."/>
            <person name="Hishigaki H."/>
            <person name="Watanabe T."/>
            <person name="Sugiyama A."/>
            <person name="Takemoto M."/>
            <person name="Kawakami B."/>
            <person name="Yamazaki M."/>
            <person name="Watanabe K."/>
            <person name="Kumagai A."/>
            <person name="Itakura S."/>
            <person name="Fukuzumi Y."/>
            <person name="Fujimori Y."/>
            <person name="Komiyama M."/>
            <person name="Tashiro H."/>
            <person name="Tanigami A."/>
            <person name="Fujiwara T."/>
            <person name="Ono T."/>
            <person name="Yamada K."/>
            <person name="Fujii Y."/>
            <person name="Ozaki K."/>
            <person name="Hirao M."/>
            <person name="Ohmori Y."/>
            <person name="Kawabata A."/>
            <person name="Hikiji T."/>
            <person name="Kobatake N."/>
            <person name="Inagaki H."/>
            <person name="Ikema Y."/>
            <person name="Okamoto S."/>
            <person name="Okitani R."/>
            <person name="Kawakami T."/>
            <person name="Noguchi S."/>
            <person name="Itoh T."/>
            <person name="Shigeta K."/>
            <person name="Senba T."/>
            <person name="Matsumura K."/>
            <person name="Nakajima Y."/>
            <person name="Mizuno T."/>
            <person name="Morinaga M."/>
            <person name="Sasaki M."/>
            <person name="Togashi T."/>
            <person name="Oyama M."/>
            <person name="Hata H."/>
            <person name="Watanabe M."/>
            <person name="Komatsu T."/>
            <person name="Mizushima-Sugano J."/>
            <person name="Satoh T."/>
            <person name="Shirai Y."/>
            <person name="Takahashi Y."/>
            <person name="Nakagawa K."/>
            <person name="Okumura K."/>
            <person name="Nagase T."/>
            <person name="Nomura N."/>
            <person name="Kikuchi H."/>
            <person name="Masuho Y."/>
            <person name="Yamashita R."/>
            <person name="Nakai K."/>
            <person name="Yada T."/>
            <person name="Nakamura Y."/>
            <person name="Ohara O."/>
            <person name="Isogai T."/>
            <person name="Sugano S."/>
        </authorList>
    </citation>
    <scope>NUCLEOTIDE SEQUENCE [LARGE SCALE MRNA] (ISOFORM 1)</scope>
</reference>
<reference key="6">
    <citation type="journal article" date="2005" name="Nature">
        <title>Generation and annotation of the DNA sequences of human chromosomes 2 and 4.</title>
        <authorList>
            <person name="Hillier L.W."/>
            <person name="Graves T.A."/>
            <person name="Fulton R.S."/>
            <person name="Fulton L.A."/>
            <person name="Pepin K.H."/>
            <person name="Minx P."/>
            <person name="Wagner-McPherson C."/>
            <person name="Layman D."/>
            <person name="Wylie K."/>
            <person name="Sekhon M."/>
            <person name="Becker M.C."/>
            <person name="Fewell G.A."/>
            <person name="Delehaunty K.D."/>
            <person name="Miner T.L."/>
            <person name="Nash W.E."/>
            <person name="Kremitzki C."/>
            <person name="Oddy L."/>
            <person name="Du H."/>
            <person name="Sun H."/>
            <person name="Bradshaw-Cordum H."/>
            <person name="Ali J."/>
            <person name="Carter J."/>
            <person name="Cordes M."/>
            <person name="Harris A."/>
            <person name="Isak A."/>
            <person name="van Brunt A."/>
            <person name="Nguyen C."/>
            <person name="Du F."/>
            <person name="Courtney L."/>
            <person name="Kalicki J."/>
            <person name="Ozersky P."/>
            <person name="Abbott S."/>
            <person name="Armstrong J."/>
            <person name="Belter E.A."/>
            <person name="Caruso L."/>
            <person name="Cedroni M."/>
            <person name="Cotton M."/>
            <person name="Davidson T."/>
            <person name="Desai A."/>
            <person name="Elliott G."/>
            <person name="Erb T."/>
            <person name="Fronick C."/>
            <person name="Gaige T."/>
            <person name="Haakenson W."/>
            <person name="Haglund K."/>
            <person name="Holmes A."/>
            <person name="Harkins R."/>
            <person name="Kim K."/>
            <person name="Kruchowski S.S."/>
            <person name="Strong C.M."/>
            <person name="Grewal N."/>
            <person name="Goyea E."/>
            <person name="Hou S."/>
            <person name="Levy A."/>
            <person name="Martinka S."/>
            <person name="Mead K."/>
            <person name="McLellan M.D."/>
            <person name="Meyer R."/>
            <person name="Randall-Maher J."/>
            <person name="Tomlinson C."/>
            <person name="Dauphin-Kohlberg S."/>
            <person name="Kozlowicz-Reilly A."/>
            <person name="Shah N."/>
            <person name="Swearengen-Shahid S."/>
            <person name="Snider J."/>
            <person name="Strong J.T."/>
            <person name="Thompson J."/>
            <person name="Yoakum M."/>
            <person name="Leonard S."/>
            <person name="Pearman C."/>
            <person name="Trani L."/>
            <person name="Radionenko M."/>
            <person name="Waligorski J.E."/>
            <person name="Wang C."/>
            <person name="Rock S.M."/>
            <person name="Tin-Wollam A.-M."/>
            <person name="Maupin R."/>
            <person name="Latreille P."/>
            <person name="Wendl M.C."/>
            <person name="Yang S.-P."/>
            <person name="Pohl C."/>
            <person name="Wallis J.W."/>
            <person name="Spieth J."/>
            <person name="Bieri T.A."/>
            <person name="Berkowicz N."/>
            <person name="Nelson J.O."/>
            <person name="Osborne J."/>
            <person name="Ding L."/>
            <person name="Meyer R."/>
            <person name="Sabo A."/>
            <person name="Shotland Y."/>
            <person name="Sinha P."/>
            <person name="Wohldmann P.E."/>
            <person name="Cook L.L."/>
            <person name="Hickenbotham M.T."/>
            <person name="Eldred J."/>
            <person name="Williams D."/>
            <person name="Jones T.A."/>
            <person name="She X."/>
            <person name="Ciccarelli F.D."/>
            <person name="Izaurralde E."/>
            <person name="Taylor J."/>
            <person name="Schmutz J."/>
            <person name="Myers R.M."/>
            <person name="Cox D.R."/>
            <person name="Huang X."/>
            <person name="McPherson J.D."/>
            <person name="Mardis E.R."/>
            <person name="Clifton S.W."/>
            <person name="Warren W.C."/>
            <person name="Chinwalla A.T."/>
            <person name="Eddy S.R."/>
            <person name="Marra M.A."/>
            <person name="Ovcharenko I."/>
            <person name="Furey T.S."/>
            <person name="Miller W."/>
            <person name="Eichler E.E."/>
            <person name="Bork P."/>
            <person name="Suyama M."/>
            <person name="Torrents D."/>
            <person name="Waterston R.H."/>
            <person name="Wilson R.K."/>
        </authorList>
    </citation>
    <scope>NUCLEOTIDE SEQUENCE [LARGE SCALE GENOMIC DNA]</scope>
</reference>
<reference key="7">
    <citation type="submission" date="2005-09" db="EMBL/GenBank/DDBJ databases">
        <authorList>
            <person name="Mural R.J."/>
            <person name="Istrail S."/>
            <person name="Sutton G.G."/>
            <person name="Florea L."/>
            <person name="Halpern A.L."/>
            <person name="Mobarry C.M."/>
            <person name="Lippert R."/>
            <person name="Walenz B."/>
            <person name="Shatkay H."/>
            <person name="Dew I."/>
            <person name="Miller J.R."/>
            <person name="Flanigan M.J."/>
            <person name="Edwards N.J."/>
            <person name="Bolanos R."/>
            <person name="Fasulo D."/>
            <person name="Halldorsson B.V."/>
            <person name="Hannenhalli S."/>
            <person name="Turner R."/>
            <person name="Yooseph S."/>
            <person name="Lu F."/>
            <person name="Nusskern D.R."/>
            <person name="Shue B.C."/>
            <person name="Zheng X.H."/>
            <person name="Zhong F."/>
            <person name="Delcher A.L."/>
            <person name="Huson D.H."/>
            <person name="Kravitz S.A."/>
            <person name="Mouchard L."/>
            <person name="Reinert K."/>
            <person name="Remington K.A."/>
            <person name="Clark A.G."/>
            <person name="Waterman M.S."/>
            <person name="Eichler E.E."/>
            <person name="Adams M.D."/>
            <person name="Hunkapiller M.W."/>
            <person name="Myers E.W."/>
            <person name="Venter J.C."/>
        </authorList>
    </citation>
    <scope>NUCLEOTIDE SEQUENCE [LARGE SCALE GENOMIC DNA]</scope>
</reference>
<reference key="8">
    <citation type="journal article" date="2004" name="Genome Res.">
        <title>The status, quality, and expansion of the NIH full-length cDNA project: the Mammalian Gene Collection (MGC).</title>
        <authorList>
            <consortium name="The MGC Project Team"/>
        </authorList>
    </citation>
    <scope>NUCLEOTIDE SEQUENCE [LARGE SCALE MRNA] (ISOFORMS 1 AND 2)</scope>
    <scope>VARIANTS MET-51 AND HIS-156</scope>
    <source>
        <tissue>Brain</tissue>
        <tissue>Ovary</tissue>
    </source>
</reference>
<reference key="9">
    <citation type="journal article" date="2006" name="Science">
        <title>The consensus coding sequences of human breast and colorectal cancers.</title>
        <authorList>
            <person name="Sjoeblom T."/>
            <person name="Jones S."/>
            <person name="Wood L.D."/>
            <person name="Parsons D.W."/>
            <person name="Lin J."/>
            <person name="Barber T.D."/>
            <person name="Mandelker D."/>
            <person name="Leary R.J."/>
            <person name="Ptak J."/>
            <person name="Silliman N."/>
            <person name="Szabo S."/>
            <person name="Buckhaults P."/>
            <person name="Farrell C."/>
            <person name="Meeh P."/>
            <person name="Markowitz S.D."/>
            <person name="Willis J."/>
            <person name="Dawson D."/>
            <person name="Willson J.K.V."/>
            <person name="Gazdar A.F."/>
            <person name="Hartigan J."/>
            <person name="Wu L."/>
            <person name="Liu C."/>
            <person name="Parmigiani G."/>
            <person name="Park B.H."/>
            <person name="Bachman K.E."/>
            <person name="Papadopoulos N."/>
            <person name="Vogelstein B."/>
            <person name="Kinzler K.W."/>
            <person name="Velculescu V.E."/>
        </authorList>
    </citation>
    <scope>VARIANT [LARGE SCALE ANALYSIS] ILE-269</scope>
</reference>
<proteinExistence type="evidence at protein level"/>
<name>FBX8_HUMAN</name>
<protein>
    <recommendedName>
        <fullName>F-box only protein 8</fullName>
    </recommendedName>
    <alternativeName>
        <fullName>F-box/SEC7 protein FBS</fullName>
    </alternativeName>
</protein>
<comment type="function">
    <text evidence="6">May promote guanine-nucleotide exchange on an ARF. Promotes the activation of ARF through replacement of GDP with GTP (Potential).</text>
</comment>
<comment type="interaction">
    <interactant intactId="EBI-11615366">
        <id>Q9NRD0</id>
    </interactant>
    <interactant intactId="EBI-353467">
        <id>P09211</id>
        <label>GSTP1</label>
    </interactant>
    <organismsDiffer>false</organismsDiffer>
    <experiments>3</experiments>
</comment>
<comment type="alternative products">
    <event type="alternative splicing"/>
    <isoform>
        <id>Q9NRD0-1</id>
        <name>1</name>
        <sequence type="displayed"/>
    </isoform>
    <isoform>
        <id>Q9NRD0-2</id>
        <name>2</name>
        <sequence type="described" ref="VSP_055885"/>
    </isoform>
</comment>
<comment type="sequence caution" evidence="6">
    <conflict type="erroneous initiation">
        <sequence resource="EMBL-CDS" id="AAF04517"/>
    </conflict>
</comment>
<feature type="chain" id="PRO_0000120218" description="F-box only protein 8">
    <location>
        <begin position="1"/>
        <end position="319"/>
    </location>
</feature>
<feature type="domain" description="F-box" evidence="1">
    <location>
        <begin position="68"/>
        <end position="111"/>
    </location>
</feature>
<feature type="domain" description="SEC7" evidence="2">
    <location>
        <begin position="146"/>
        <end position="276"/>
    </location>
</feature>
<feature type="splice variant" id="VSP_055885" description="In isoform 2." evidence="5">
    <location>
        <begin position="59"/>
        <end position="99"/>
    </location>
</feature>
<feature type="sequence variant" id="VAR_071118" description="In dbSNP:rs17857220." evidence="3">
    <original>I</original>
    <variation>M</variation>
    <location>
        <position position="51"/>
    </location>
</feature>
<feature type="sequence variant" id="VAR_071119" description="In dbSNP:rs17854000." evidence="3">
    <original>Y</original>
    <variation>H</variation>
    <location>
        <position position="156"/>
    </location>
</feature>
<feature type="sequence variant" id="VAR_036157" description="In a breast cancer sample; somatic mutation." evidence="4">
    <original>L</original>
    <variation>I</variation>
    <location>
        <position position="269"/>
    </location>
</feature>
<feature type="sequence conflict" description="In Ref. 4; AAQ89083." evidence="6" ref="4">
    <original>A</original>
    <variation>D</variation>
    <location>
        <position position="34"/>
    </location>
</feature>
<feature type="sequence conflict" description="In Ref. 3; AAF86868." evidence="6" ref="3">
    <original>C</original>
    <variation>W</variation>
    <location>
        <position position="119"/>
    </location>
</feature>
<feature type="sequence conflict" description="In Ref. 3; AAF86868." evidence="6" ref="3">
    <original>L</original>
    <variation>V</variation>
    <location>
        <position position="135"/>
    </location>
</feature>
<keyword id="KW-0025">Alternative splicing</keyword>
<keyword id="KW-0344">Guanine-nucleotide releasing factor</keyword>
<keyword id="KW-1267">Proteomics identification</keyword>
<keyword id="KW-1185">Reference proteome</keyword>
<sequence>MGQGLWRVVRNQQLQQEGYSEQGYLTREQSRRMAASNISNTNHRKQVQGGIDIYHLLKARKSKEQEGFINLEMLPPELSFTILSYLNATDLCLASCVWQDLANDELLWQGLCKSTWGHCSIYNKNPPLGFSFRKLYMQLDEGSLTFNANPDEGVNYFMSKGILDDSPKEIAKFIFCTRTLNWKKLRIYLDERRDVLDDLVTLHNFRNQFLPNALREFFRHIHAPEERGEYLETLITKFSHRFCACNPDLMRELGLSPDAVYVLCYSLILLSIDLTSPHVKNKMSKREFIRNTRRAAQNISEDFVGHLYDNIYLIGHVAA</sequence>